<gene>
    <name evidence="1" type="primary">mraZ</name>
    <name type="ordered locus">NMA2075</name>
</gene>
<feature type="chain" id="PRO_0000108513" description="Transcriptional regulator MraZ">
    <location>
        <begin position="1"/>
        <end position="151"/>
    </location>
</feature>
<feature type="domain" description="SpoVT-AbrB 1" evidence="2">
    <location>
        <begin position="5"/>
        <end position="51"/>
    </location>
</feature>
<feature type="domain" description="SpoVT-AbrB 2" evidence="2">
    <location>
        <begin position="81"/>
        <end position="124"/>
    </location>
</feature>
<evidence type="ECO:0000255" key="1">
    <source>
        <dbReference type="HAMAP-Rule" id="MF_01008"/>
    </source>
</evidence>
<evidence type="ECO:0000255" key="2">
    <source>
        <dbReference type="PROSITE-ProRule" id="PRU01076"/>
    </source>
</evidence>
<reference key="1">
    <citation type="journal article" date="2000" name="Nature">
        <title>Complete DNA sequence of a serogroup A strain of Neisseria meningitidis Z2491.</title>
        <authorList>
            <person name="Parkhill J."/>
            <person name="Achtman M."/>
            <person name="James K.D."/>
            <person name="Bentley S.D."/>
            <person name="Churcher C.M."/>
            <person name="Klee S.R."/>
            <person name="Morelli G."/>
            <person name="Basham D."/>
            <person name="Brown D."/>
            <person name="Chillingworth T."/>
            <person name="Davies R.M."/>
            <person name="Davis P."/>
            <person name="Devlin K."/>
            <person name="Feltwell T."/>
            <person name="Hamlin N."/>
            <person name="Holroyd S."/>
            <person name="Jagels K."/>
            <person name="Leather S."/>
            <person name="Moule S."/>
            <person name="Mungall K.L."/>
            <person name="Quail M.A."/>
            <person name="Rajandream M.A."/>
            <person name="Rutherford K.M."/>
            <person name="Simmonds M."/>
            <person name="Skelton J."/>
            <person name="Whitehead S."/>
            <person name="Spratt B.G."/>
            <person name="Barrell B.G."/>
        </authorList>
    </citation>
    <scope>NUCLEOTIDE SEQUENCE [LARGE SCALE GENOMIC DNA]</scope>
    <source>
        <strain>DSM 15465 / Z2491</strain>
    </source>
</reference>
<name>MRAZ_NEIMA</name>
<sequence>MFGGAHELSIDSKGRLAVPAKFRDILSRLYTPAVVVTLESKHKLLMYPVAEWEKVAAQLLNLKVADNPVLRRFQNLLLHNAEILEWDSAGRVLVPAGLRKRVDFDREVVLVGRANRLELWGREQWEAEMVQALDDDPDELAFQLGQTDLQL</sequence>
<comment type="subunit">
    <text evidence="1">Forms oligomers.</text>
</comment>
<comment type="subcellular location">
    <subcellularLocation>
        <location evidence="1">Cytoplasm</location>
        <location evidence="1">Nucleoid</location>
    </subcellularLocation>
</comment>
<comment type="similarity">
    <text evidence="1">Belongs to the MraZ family.</text>
</comment>
<organism>
    <name type="scientific">Neisseria meningitidis serogroup A / serotype 4A (strain DSM 15465 / Z2491)</name>
    <dbReference type="NCBI Taxonomy" id="122587"/>
    <lineage>
        <taxon>Bacteria</taxon>
        <taxon>Pseudomonadati</taxon>
        <taxon>Pseudomonadota</taxon>
        <taxon>Betaproteobacteria</taxon>
        <taxon>Neisseriales</taxon>
        <taxon>Neisseriaceae</taxon>
        <taxon>Neisseria</taxon>
    </lineage>
</organism>
<protein>
    <recommendedName>
        <fullName>Transcriptional regulator MraZ</fullName>
    </recommendedName>
</protein>
<dbReference type="EMBL" id="AL157959">
    <property type="protein sequence ID" value="CAM09177.1"/>
    <property type="molecule type" value="Genomic_DNA"/>
</dbReference>
<dbReference type="PIR" id="E81778">
    <property type="entry name" value="E81778"/>
</dbReference>
<dbReference type="RefSeq" id="WP_002236706.1">
    <property type="nucleotide sequence ID" value="NC_003116.1"/>
</dbReference>
<dbReference type="SMR" id="Q9JSY8"/>
<dbReference type="EnsemblBacteria" id="CAM09177">
    <property type="protein sequence ID" value="CAM09177"/>
    <property type="gene ID" value="NMA2075"/>
</dbReference>
<dbReference type="KEGG" id="nma:NMA2075"/>
<dbReference type="HOGENOM" id="CLU_107907_2_0_4"/>
<dbReference type="Proteomes" id="UP000000626">
    <property type="component" value="Chromosome"/>
</dbReference>
<dbReference type="GO" id="GO:0005737">
    <property type="term" value="C:cytoplasm"/>
    <property type="evidence" value="ECO:0007669"/>
    <property type="project" value="UniProtKB-UniRule"/>
</dbReference>
<dbReference type="GO" id="GO:0009295">
    <property type="term" value="C:nucleoid"/>
    <property type="evidence" value="ECO:0007669"/>
    <property type="project" value="UniProtKB-SubCell"/>
</dbReference>
<dbReference type="GO" id="GO:0003700">
    <property type="term" value="F:DNA-binding transcription factor activity"/>
    <property type="evidence" value="ECO:0007669"/>
    <property type="project" value="UniProtKB-UniRule"/>
</dbReference>
<dbReference type="GO" id="GO:0000976">
    <property type="term" value="F:transcription cis-regulatory region binding"/>
    <property type="evidence" value="ECO:0007669"/>
    <property type="project" value="TreeGrafter"/>
</dbReference>
<dbReference type="GO" id="GO:2000143">
    <property type="term" value="P:negative regulation of DNA-templated transcription initiation"/>
    <property type="evidence" value="ECO:0007669"/>
    <property type="project" value="TreeGrafter"/>
</dbReference>
<dbReference type="CDD" id="cd16321">
    <property type="entry name" value="MraZ_C"/>
    <property type="match status" value="1"/>
</dbReference>
<dbReference type="CDD" id="cd16320">
    <property type="entry name" value="MraZ_N"/>
    <property type="match status" value="1"/>
</dbReference>
<dbReference type="FunFam" id="3.40.1550.20:FF:000006">
    <property type="entry name" value="Transcriptional regulator MraZ"/>
    <property type="match status" value="1"/>
</dbReference>
<dbReference type="Gene3D" id="3.40.1550.20">
    <property type="entry name" value="Transcriptional regulator MraZ domain"/>
    <property type="match status" value="1"/>
</dbReference>
<dbReference type="HAMAP" id="MF_01008">
    <property type="entry name" value="MraZ"/>
    <property type="match status" value="1"/>
</dbReference>
<dbReference type="InterPro" id="IPR003444">
    <property type="entry name" value="MraZ"/>
</dbReference>
<dbReference type="InterPro" id="IPR035644">
    <property type="entry name" value="MraZ_C"/>
</dbReference>
<dbReference type="InterPro" id="IPR020603">
    <property type="entry name" value="MraZ_dom"/>
</dbReference>
<dbReference type="InterPro" id="IPR035642">
    <property type="entry name" value="MraZ_N"/>
</dbReference>
<dbReference type="InterPro" id="IPR038619">
    <property type="entry name" value="MraZ_sf"/>
</dbReference>
<dbReference type="InterPro" id="IPR007159">
    <property type="entry name" value="SpoVT-AbrB_dom"/>
</dbReference>
<dbReference type="InterPro" id="IPR037914">
    <property type="entry name" value="SpoVT-AbrB_sf"/>
</dbReference>
<dbReference type="NCBIfam" id="TIGR00242">
    <property type="entry name" value="division/cell wall cluster transcriptional repressor MraZ"/>
    <property type="match status" value="1"/>
</dbReference>
<dbReference type="PANTHER" id="PTHR34701">
    <property type="entry name" value="TRANSCRIPTIONAL REGULATOR MRAZ"/>
    <property type="match status" value="1"/>
</dbReference>
<dbReference type="PANTHER" id="PTHR34701:SF1">
    <property type="entry name" value="TRANSCRIPTIONAL REGULATOR MRAZ"/>
    <property type="match status" value="1"/>
</dbReference>
<dbReference type="Pfam" id="PF02381">
    <property type="entry name" value="MraZ"/>
    <property type="match status" value="2"/>
</dbReference>
<dbReference type="SUPFAM" id="SSF89447">
    <property type="entry name" value="AbrB/MazE/MraZ-like"/>
    <property type="match status" value="1"/>
</dbReference>
<dbReference type="PROSITE" id="PS51740">
    <property type="entry name" value="SPOVT_ABRB"/>
    <property type="match status" value="2"/>
</dbReference>
<accession>Q9JSY8</accession>
<accession>A1ITQ9</accession>
<proteinExistence type="inferred from homology"/>
<keyword id="KW-0963">Cytoplasm</keyword>
<keyword id="KW-0238">DNA-binding</keyword>
<keyword id="KW-0677">Repeat</keyword>
<keyword id="KW-0804">Transcription</keyword>
<keyword id="KW-0805">Transcription regulation</keyword>